<accession>B9M913</accession>
<evidence type="ECO:0000255" key="1">
    <source>
        <dbReference type="HAMAP-Rule" id="MF_00367"/>
    </source>
</evidence>
<evidence type="ECO:0000255" key="2">
    <source>
        <dbReference type="PROSITE-ProRule" id="PRU01050"/>
    </source>
</evidence>
<comment type="function">
    <text evidence="1">An essential GTPase that binds both GDP and GTP, with rapid nucleotide exchange. Plays a role in 16S rRNA processing and 30S ribosomal subunit biogenesis and possibly also in cell cycle regulation and energy metabolism.</text>
</comment>
<comment type="subunit">
    <text evidence="1">Monomer.</text>
</comment>
<comment type="subcellular location">
    <subcellularLocation>
        <location>Cytoplasm</location>
    </subcellularLocation>
    <subcellularLocation>
        <location evidence="1">Cell inner membrane</location>
        <topology evidence="1">Peripheral membrane protein</topology>
    </subcellularLocation>
</comment>
<comment type="similarity">
    <text evidence="1 2">Belongs to the TRAFAC class TrmE-Era-EngA-EngB-Septin-like GTPase superfamily. Era GTPase family.</text>
</comment>
<gene>
    <name evidence="1" type="primary">era</name>
    <name type="ordered locus">Geob_2155</name>
</gene>
<proteinExistence type="inferred from homology"/>
<sequence length="297" mass="33341">MTEQQFHSGFVSIIGRPNVGKSTLLNKILGDKIVITSDKPQTTRNRIQGIHNLPGCQIVFIDTPGIHRAKSRLNKYMVDVALSSIKEVDVILFLVEADTKPANQEETILGALASAEAPVVLVINKVDLVAKESLLEKMAAYSGLYPFREVIPVSALTGDNTGRLVQVVRDLLPEGPPYFPDDILTDVPERFVVAEIVREKVFRLTHDEVPYSVAVVVESFKERDDGLILISAVINVERDSQKGIIIGRKGEMLKKIGMQARREIEELLDTRIFLELFVRVSREWSENKQMLKEFGYE</sequence>
<organism>
    <name type="scientific">Geotalea daltonii (strain DSM 22248 / JCM 15807 / FRC-32)</name>
    <name type="common">Geobacter daltonii</name>
    <dbReference type="NCBI Taxonomy" id="316067"/>
    <lineage>
        <taxon>Bacteria</taxon>
        <taxon>Pseudomonadati</taxon>
        <taxon>Thermodesulfobacteriota</taxon>
        <taxon>Desulfuromonadia</taxon>
        <taxon>Geobacterales</taxon>
        <taxon>Geobacteraceae</taxon>
        <taxon>Geotalea</taxon>
    </lineage>
</organism>
<reference key="1">
    <citation type="submission" date="2009-01" db="EMBL/GenBank/DDBJ databases">
        <title>Complete sequence of Geobacter sp. FRC-32.</title>
        <authorList>
            <consortium name="US DOE Joint Genome Institute"/>
            <person name="Lucas S."/>
            <person name="Copeland A."/>
            <person name="Lapidus A."/>
            <person name="Glavina del Rio T."/>
            <person name="Dalin E."/>
            <person name="Tice H."/>
            <person name="Bruce D."/>
            <person name="Goodwin L."/>
            <person name="Pitluck S."/>
            <person name="Saunders E."/>
            <person name="Brettin T."/>
            <person name="Detter J.C."/>
            <person name="Han C."/>
            <person name="Larimer F."/>
            <person name="Land M."/>
            <person name="Hauser L."/>
            <person name="Kyrpides N."/>
            <person name="Ovchinnikova G."/>
            <person name="Kostka J."/>
            <person name="Richardson P."/>
        </authorList>
    </citation>
    <scope>NUCLEOTIDE SEQUENCE [LARGE SCALE GENOMIC DNA]</scope>
    <source>
        <strain>DSM 22248 / JCM 15807 / FRC-32</strain>
    </source>
</reference>
<keyword id="KW-0997">Cell inner membrane</keyword>
<keyword id="KW-1003">Cell membrane</keyword>
<keyword id="KW-0963">Cytoplasm</keyword>
<keyword id="KW-0342">GTP-binding</keyword>
<keyword id="KW-0472">Membrane</keyword>
<keyword id="KW-0547">Nucleotide-binding</keyword>
<keyword id="KW-1185">Reference proteome</keyword>
<keyword id="KW-0690">Ribosome biogenesis</keyword>
<keyword id="KW-0694">RNA-binding</keyword>
<keyword id="KW-0699">rRNA-binding</keyword>
<name>ERA_GEODF</name>
<dbReference type="EMBL" id="CP001390">
    <property type="protein sequence ID" value="ACM20509.1"/>
    <property type="molecule type" value="Genomic_DNA"/>
</dbReference>
<dbReference type="RefSeq" id="WP_012647238.1">
    <property type="nucleotide sequence ID" value="NC_011979.1"/>
</dbReference>
<dbReference type="SMR" id="B9M913"/>
<dbReference type="STRING" id="316067.Geob_2155"/>
<dbReference type="KEGG" id="geo:Geob_2155"/>
<dbReference type="eggNOG" id="COG1159">
    <property type="taxonomic scope" value="Bacteria"/>
</dbReference>
<dbReference type="HOGENOM" id="CLU_038009_1_0_7"/>
<dbReference type="OrthoDB" id="9805918at2"/>
<dbReference type="Proteomes" id="UP000007721">
    <property type="component" value="Chromosome"/>
</dbReference>
<dbReference type="GO" id="GO:0005829">
    <property type="term" value="C:cytosol"/>
    <property type="evidence" value="ECO:0007669"/>
    <property type="project" value="TreeGrafter"/>
</dbReference>
<dbReference type="GO" id="GO:0005886">
    <property type="term" value="C:plasma membrane"/>
    <property type="evidence" value="ECO:0007669"/>
    <property type="project" value="UniProtKB-SubCell"/>
</dbReference>
<dbReference type="GO" id="GO:0005525">
    <property type="term" value="F:GTP binding"/>
    <property type="evidence" value="ECO:0007669"/>
    <property type="project" value="UniProtKB-UniRule"/>
</dbReference>
<dbReference type="GO" id="GO:0003924">
    <property type="term" value="F:GTPase activity"/>
    <property type="evidence" value="ECO:0007669"/>
    <property type="project" value="UniProtKB-UniRule"/>
</dbReference>
<dbReference type="GO" id="GO:0043024">
    <property type="term" value="F:ribosomal small subunit binding"/>
    <property type="evidence" value="ECO:0007669"/>
    <property type="project" value="TreeGrafter"/>
</dbReference>
<dbReference type="GO" id="GO:0070181">
    <property type="term" value="F:small ribosomal subunit rRNA binding"/>
    <property type="evidence" value="ECO:0007669"/>
    <property type="project" value="UniProtKB-UniRule"/>
</dbReference>
<dbReference type="GO" id="GO:0000028">
    <property type="term" value="P:ribosomal small subunit assembly"/>
    <property type="evidence" value="ECO:0007669"/>
    <property type="project" value="TreeGrafter"/>
</dbReference>
<dbReference type="CDD" id="cd04163">
    <property type="entry name" value="Era"/>
    <property type="match status" value="1"/>
</dbReference>
<dbReference type="CDD" id="cd22534">
    <property type="entry name" value="KH-II_Era"/>
    <property type="match status" value="1"/>
</dbReference>
<dbReference type="FunFam" id="3.30.300.20:FF:000003">
    <property type="entry name" value="GTPase Era"/>
    <property type="match status" value="1"/>
</dbReference>
<dbReference type="FunFam" id="3.40.50.300:FF:000094">
    <property type="entry name" value="GTPase Era"/>
    <property type="match status" value="1"/>
</dbReference>
<dbReference type="Gene3D" id="3.30.300.20">
    <property type="match status" value="1"/>
</dbReference>
<dbReference type="Gene3D" id="3.40.50.300">
    <property type="entry name" value="P-loop containing nucleotide triphosphate hydrolases"/>
    <property type="match status" value="1"/>
</dbReference>
<dbReference type="HAMAP" id="MF_00367">
    <property type="entry name" value="GTPase_Era"/>
    <property type="match status" value="1"/>
</dbReference>
<dbReference type="InterPro" id="IPR030388">
    <property type="entry name" value="G_ERA_dom"/>
</dbReference>
<dbReference type="InterPro" id="IPR006073">
    <property type="entry name" value="GTP-bd"/>
</dbReference>
<dbReference type="InterPro" id="IPR005662">
    <property type="entry name" value="GTPase_Era-like"/>
</dbReference>
<dbReference type="InterPro" id="IPR015946">
    <property type="entry name" value="KH_dom-like_a/b"/>
</dbReference>
<dbReference type="InterPro" id="IPR004044">
    <property type="entry name" value="KH_dom_type_2"/>
</dbReference>
<dbReference type="InterPro" id="IPR009019">
    <property type="entry name" value="KH_sf_prok-type"/>
</dbReference>
<dbReference type="InterPro" id="IPR027417">
    <property type="entry name" value="P-loop_NTPase"/>
</dbReference>
<dbReference type="InterPro" id="IPR005225">
    <property type="entry name" value="Small_GTP-bd"/>
</dbReference>
<dbReference type="NCBIfam" id="TIGR00436">
    <property type="entry name" value="era"/>
    <property type="match status" value="1"/>
</dbReference>
<dbReference type="NCBIfam" id="NF000908">
    <property type="entry name" value="PRK00089.1"/>
    <property type="match status" value="1"/>
</dbReference>
<dbReference type="NCBIfam" id="TIGR00231">
    <property type="entry name" value="small_GTP"/>
    <property type="match status" value="1"/>
</dbReference>
<dbReference type="PANTHER" id="PTHR42698">
    <property type="entry name" value="GTPASE ERA"/>
    <property type="match status" value="1"/>
</dbReference>
<dbReference type="PANTHER" id="PTHR42698:SF1">
    <property type="entry name" value="GTPASE ERA, MITOCHONDRIAL"/>
    <property type="match status" value="1"/>
</dbReference>
<dbReference type="Pfam" id="PF07650">
    <property type="entry name" value="KH_2"/>
    <property type="match status" value="1"/>
</dbReference>
<dbReference type="Pfam" id="PF01926">
    <property type="entry name" value="MMR_HSR1"/>
    <property type="match status" value="1"/>
</dbReference>
<dbReference type="PRINTS" id="PR00326">
    <property type="entry name" value="GTP1OBG"/>
</dbReference>
<dbReference type="SUPFAM" id="SSF52540">
    <property type="entry name" value="P-loop containing nucleoside triphosphate hydrolases"/>
    <property type="match status" value="1"/>
</dbReference>
<dbReference type="SUPFAM" id="SSF54814">
    <property type="entry name" value="Prokaryotic type KH domain (KH-domain type II)"/>
    <property type="match status" value="1"/>
</dbReference>
<dbReference type="PROSITE" id="PS51713">
    <property type="entry name" value="G_ERA"/>
    <property type="match status" value="1"/>
</dbReference>
<dbReference type="PROSITE" id="PS50823">
    <property type="entry name" value="KH_TYPE_2"/>
    <property type="match status" value="1"/>
</dbReference>
<protein>
    <recommendedName>
        <fullName evidence="1">GTPase Era</fullName>
    </recommendedName>
</protein>
<feature type="chain" id="PRO_1000205542" description="GTPase Era">
    <location>
        <begin position="1"/>
        <end position="297"/>
    </location>
</feature>
<feature type="domain" description="Era-type G" evidence="2">
    <location>
        <begin position="7"/>
        <end position="174"/>
    </location>
</feature>
<feature type="domain" description="KH type-2" evidence="1">
    <location>
        <begin position="205"/>
        <end position="282"/>
    </location>
</feature>
<feature type="region of interest" description="G1" evidence="2">
    <location>
        <begin position="15"/>
        <end position="22"/>
    </location>
</feature>
<feature type="region of interest" description="G2" evidence="2">
    <location>
        <begin position="41"/>
        <end position="45"/>
    </location>
</feature>
<feature type="region of interest" description="G3" evidence="2">
    <location>
        <begin position="62"/>
        <end position="65"/>
    </location>
</feature>
<feature type="region of interest" description="G4" evidence="2">
    <location>
        <begin position="124"/>
        <end position="127"/>
    </location>
</feature>
<feature type="region of interest" description="G5" evidence="2">
    <location>
        <begin position="153"/>
        <end position="155"/>
    </location>
</feature>
<feature type="binding site" evidence="1">
    <location>
        <begin position="15"/>
        <end position="22"/>
    </location>
    <ligand>
        <name>GTP</name>
        <dbReference type="ChEBI" id="CHEBI:37565"/>
    </ligand>
</feature>
<feature type="binding site" evidence="1">
    <location>
        <begin position="62"/>
        <end position="66"/>
    </location>
    <ligand>
        <name>GTP</name>
        <dbReference type="ChEBI" id="CHEBI:37565"/>
    </ligand>
</feature>
<feature type="binding site" evidence="1">
    <location>
        <begin position="124"/>
        <end position="127"/>
    </location>
    <ligand>
        <name>GTP</name>
        <dbReference type="ChEBI" id="CHEBI:37565"/>
    </ligand>
</feature>